<keyword id="KW-1015">Disulfide bond</keyword>
<keyword id="KW-0646">Protease inhibitor</keyword>
<keyword id="KW-0964">Secreted</keyword>
<keyword id="KW-0722">Serine protease inhibitor</keyword>
<keyword id="KW-0732">Signal</keyword>
<reference key="1">
    <citation type="journal article" date="2008" name="Cell. Mol. Life Sci.">
        <title>Common evolution of waprin and Kunitz-like toxin families in Australian venomous snakes.</title>
        <authorList>
            <person name="St Pierre L."/>
            <person name="Earl S.T."/>
            <person name="Filippovich I."/>
            <person name="Sorokina N."/>
            <person name="Masci P.P."/>
            <person name="De Jersey J."/>
            <person name="Lavin M.F."/>
        </authorList>
    </citation>
    <scope>NUCLEOTIDE SEQUENCE [GENOMIC DNA]</scope>
    <source>
        <tissue>Venom gland</tissue>
    </source>
</reference>
<name>IVBI4_PSEPO</name>
<evidence type="ECO:0000250" key="1"/>
<evidence type="ECO:0000255" key="2"/>
<evidence type="ECO:0000255" key="3">
    <source>
        <dbReference type="PROSITE-ProRule" id="PRU00031"/>
    </source>
</evidence>
<evidence type="ECO:0000305" key="4"/>
<comment type="function">
    <text evidence="4">Serine protease inhibitor.</text>
</comment>
<comment type="subcellular location">
    <subcellularLocation>
        <location evidence="1">Secreted</location>
    </subcellularLocation>
</comment>
<sequence>MSSGGLLLLLGLLTLREGLTPVSSKDRPDFCELPDDRGPCRGIFHAFYYNPDQRQCLEFIYGGCYGNANNFKTIDECKRTCAA</sequence>
<organism>
    <name type="scientific">Pseudechis porphyriacus</name>
    <name type="common">Red-bellied black snake</name>
    <dbReference type="NCBI Taxonomy" id="8671"/>
    <lineage>
        <taxon>Eukaryota</taxon>
        <taxon>Metazoa</taxon>
        <taxon>Chordata</taxon>
        <taxon>Craniata</taxon>
        <taxon>Vertebrata</taxon>
        <taxon>Euteleostomi</taxon>
        <taxon>Lepidosauria</taxon>
        <taxon>Squamata</taxon>
        <taxon>Bifurcata</taxon>
        <taxon>Unidentata</taxon>
        <taxon>Episquamata</taxon>
        <taxon>Toxicofera</taxon>
        <taxon>Serpentes</taxon>
        <taxon>Colubroidea</taxon>
        <taxon>Elapidae</taxon>
        <taxon>Hydrophiinae</taxon>
        <taxon>Pseudechis</taxon>
    </lineage>
</organism>
<proteinExistence type="inferred from homology"/>
<accession>B5L5R0</accession>
<feature type="signal peptide" evidence="2">
    <location>
        <begin position="1"/>
        <end position="24"/>
    </location>
</feature>
<feature type="chain" id="PRO_5000395648" description="Blackelin-4">
    <location>
        <begin position="25"/>
        <end position="83"/>
    </location>
</feature>
<feature type="domain" description="BPTI/Kunitz inhibitor" evidence="3">
    <location>
        <begin position="31"/>
        <end position="81"/>
    </location>
</feature>
<feature type="site" description="Reactive bond for trypsin" evidence="1">
    <location>
        <begin position="41"/>
        <end position="42"/>
    </location>
</feature>
<feature type="disulfide bond" evidence="3">
    <location>
        <begin position="31"/>
        <end position="81"/>
    </location>
</feature>
<feature type="disulfide bond" evidence="3">
    <location>
        <begin position="40"/>
        <end position="64"/>
    </location>
</feature>
<feature type="disulfide bond" evidence="3">
    <location>
        <begin position="56"/>
        <end position="77"/>
    </location>
</feature>
<dbReference type="EMBL" id="EU401848">
    <property type="protein sequence ID" value="ACC77797.1"/>
    <property type="molecule type" value="Genomic_DNA"/>
</dbReference>
<dbReference type="SMR" id="B5L5R0"/>
<dbReference type="MEROPS" id="I02.052"/>
<dbReference type="GO" id="GO:0005615">
    <property type="term" value="C:extracellular space"/>
    <property type="evidence" value="ECO:0007669"/>
    <property type="project" value="TreeGrafter"/>
</dbReference>
<dbReference type="GO" id="GO:0004867">
    <property type="term" value="F:serine-type endopeptidase inhibitor activity"/>
    <property type="evidence" value="ECO:0007669"/>
    <property type="project" value="UniProtKB-KW"/>
</dbReference>
<dbReference type="CDD" id="cd22594">
    <property type="entry name" value="Kunitz_textilinin-like"/>
    <property type="match status" value="1"/>
</dbReference>
<dbReference type="FunFam" id="4.10.410.10:FF:000021">
    <property type="entry name" value="Serine protease inhibitor, putative"/>
    <property type="match status" value="1"/>
</dbReference>
<dbReference type="Gene3D" id="4.10.410.10">
    <property type="entry name" value="Pancreatic trypsin inhibitor Kunitz domain"/>
    <property type="match status" value="1"/>
</dbReference>
<dbReference type="InterPro" id="IPR002223">
    <property type="entry name" value="Kunitz_BPTI"/>
</dbReference>
<dbReference type="InterPro" id="IPR036880">
    <property type="entry name" value="Kunitz_BPTI_sf"/>
</dbReference>
<dbReference type="InterPro" id="IPR020901">
    <property type="entry name" value="Prtase_inh_Kunz-CS"/>
</dbReference>
<dbReference type="InterPro" id="IPR050098">
    <property type="entry name" value="TFPI/VKTCI-like"/>
</dbReference>
<dbReference type="PANTHER" id="PTHR10083">
    <property type="entry name" value="KUNITZ-TYPE PROTEASE INHIBITOR-RELATED"/>
    <property type="match status" value="1"/>
</dbReference>
<dbReference type="PANTHER" id="PTHR10083:SF376">
    <property type="entry name" value="SERINE PEPTIDASE INHIBITOR, KUNITZ TYPE, 3"/>
    <property type="match status" value="1"/>
</dbReference>
<dbReference type="Pfam" id="PF00014">
    <property type="entry name" value="Kunitz_BPTI"/>
    <property type="match status" value="1"/>
</dbReference>
<dbReference type="PRINTS" id="PR00759">
    <property type="entry name" value="BASICPTASE"/>
</dbReference>
<dbReference type="SMART" id="SM00131">
    <property type="entry name" value="KU"/>
    <property type="match status" value="1"/>
</dbReference>
<dbReference type="SUPFAM" id="SSF57362">
    <property type="entry name" value="BPTI-like"/>
    <property type="match status" value="1"/>
</dbReference>
<dbReference type="PROSITE" id="PS00280">
    <property type="entry name" value="BPTI_KUNITZ_1"/>
    <property type="match status" value="1"/>
</dbReference>
<dbReference type="PROSITE" id="PS50279">
    <property type="entry name" value="BPTI_KUNITZ_2"/>
    <property type="match status" value="1"/>
</dbReference>
<protein>
    <recommendedName>
        <fullName>Blackelin-4</fullName>
    </recommendedName>
</protein>